<name>MSHB_GORB4</name>
<comment type="function">
    <text evidence="1">Catalyzes the deacetylation of 1D-myo-inositol 2-acetamido-2-deoxy-alpha-D-glucopyranoside (GlcNAc-Ins) in the mycothiol biosynthesis pathway.</text>
</comment>
<comment type="catalytic activity">
    <reaction evidence="1">
        <text>1D-myo-inositol 2-acetamido-2-deoxy-alpha-D-glucopyranoside + H2O = 1D-myo-inositol 2-amino-2-deoxy-alpha-D-glucopyranoside + acetate</text>
        <dbReference type="Rhea" id="RHEA:26180"/>
        <dbReference type="ChEBI" id="CHEBI:15377"/>
        <dbReference type="ChEBI" id="CHEBI:30089"/>
        <dbReference type="ChEBI" id="CHEBI:52442"/>
        <dbReference type="ChEBI" id="CHEBI:58886"/>
        <dbReference type="EC" id="3.5.1.103"/>
    </reaction>
</comment>
<comment type="cofactor">
    <cofactor evidence="1">
        <name>Zn(2+)</name>
        <dbReference type="ChEBI" id="CHEBI:29105"/>
    </cofactor>
    <text evidence="1">Binds 1 zinc ion per subunit.</text>
</comment>
<comment type="similarity">
    <text evidence="1">Belongs to the MshB deacetylase family.</text>
</comment>
<gene>
    <name evidence="1" type="primary">mshB</name>
    <name type="ordered locus">Gbro_3329</name>
</gene>
<proteinExistence type="inferred from homology"/>
<keyword id="KW-0378">Hydrolase</keyword>
<keyword id="KW-0479">Metal-binding</keyword>
<keyword id="KW-1185">Reference proteome</keyword>
<keyword id="KW-0862">Zinc</keyword>
<accession>D0LD40</accession>
<dbReference type="EC" id="3.5.1.103" evidence="1"/>
<dbReference type="EMBL" id="CP001802">
    <property type="protein sequence ID" value="ACY22533.1"/>
    <property type="molecule type" value="Genomic_DNA"/>
</dbReference>
<dbReference type="RefSeq" id="WP_012835048.1">
    <property type="nucleotide sequence ID" value="NC_013441.1"/>
</dbReference>
<dbReference type="SMR" id="D0LD40"/>
<dbReference type="STRING" id="526226.Gbro_3329"/>
<dbReference type="KEGG" id="gbr:Gbro_3329"/>
<dbReference type="eggNOG" id="COG2120">
    <property type="taxonomic scope" value="Bacteria"/>
</dbReference>
<dbReference type="HOGENOM" id="CLU_049311_2_1_11"/>
<dbReference type="OrthoDB" id="158614at2"/>
<dbReference type="Proteomes" id="UP000001219">
    <property type="component" value="Chromosome"/>
</dbReference>
<dbReference type="GO" id="GO:0035595">
    <property type="term" value="F:N-acetylglucosaminylinositol deacetylase activity"/>
    <property type="evidence" value="ECO:0007669"/>
    <property type="project" value="UniProtKB-EC"/>
</dbReference>
<dbReference type="GO" id="GO:0008270">
    <property type="term" value="F:zinc ion binding"/>
    <property type="evidence" value="ECO:0007669"/>
    <property type="project" value="UniProtKB-UniRule"/>
</dbReference>
<dbReference type="GO" id="GO:0010125">
    <property type="term" value="P:mycothiol biosynthetic process"/>
    <property type="evidence" value="ECO:0007669"/>
    <property type="project" value="UniProtKB-UniRule"/>
</dbReference>
<dbReference type="Gene3D" id="3.40.50.10320">
    <property type="entry name" value="LmbE-like"/>
    <property type="match status" value="1"/>
</dbReference>
<dbReference type="HAMAP" id="MF_01696">
    <property type="entry name" value="MshB"/>
    <property type="match status" value="1"/>
</dbReference>
<dbReference type="InterPro" id="IPR003737">
    <property type="entry name" value="GlcNAc_PI_deacetylase-related"/>
</dbReference>
<dbReference type="InterPro" id="IPR024078">
    <property type="entry name" value="LmbE-like_dom_sf"/>
</dbReference>
<dbReference type="InterPro" id="IPR017810">
    <property type="entry name" value="Mycothiol_biosynthesis_MshB"/>
</dbReference>
<dbReference type="NCBIfam" id="TIGR03445">
    <property type="entry name" value="mycothiol_MshB"/>
    <property type="match status" value="1"/>
</dbReference>
<dbReference type="PANTHER" id="PTHR12993:SF26">
    <property type="entry name" value="1D-MYO-INOSITOL 2-ACETAMIDO-2-DEOXY-ALPHA-D-GLUCOPYRANOSIDE DEACETYLASE"/>
    <property type="match status" value="1"/>
</dbReference>
<dbReference type="PANTHER" id="PTHR12993">
    <property type="entry name" value="N-ACETYLGLUCOSAMINYL-PHOSPHATIDYLINOSITOL DE-N-ACETYLASE-RELATED"/>
    <property type="match status" value="1"/>
</dbReference>
<dbReference type="Pfam" id="PF02585">
    <property type="entry name" value="PIG-L"/>
    <property type="match status" value="1"/>
</dbReference>
<dbReference type="SUPFAM" id="SSF102588">
    <property type="entry name" value="LmbE-like"/>
    <property type="match status" value="1"/>
</dbReference>
<feature type="chain" id="PRO_0000400189" description="1D-myo-inositol 2-acetamido-2-deoxy-alpha-D-glucopyranoside deacetylase">
    <location>
        <begin position="1"/>
        <end position="283"/>
    </location>
</feature>
<feature type="binding site" evidence="1">
    <location>
        <position position="7"/>
    </location>
    <ligand>
        <name>Zn(2+)</name>
        <dbReference type="ChEBI" id="CHEBI:29105"/>
    </ligand>
</feature>
<feature type="binding site" evidence="1">
    <location>
        <position position="10"/>
    </location>
    <ligand>
        <name>Zn(2+)</name>
        <dbReference type="ChEBI" id="CHEBI:29105"/>
    </ligand>
</feature>
<feature type="binding site" evidence="1">
    <location>
        <position position="148"/>
    </location>
    <ligand>
        <name>Zn(2+)</name>
        <dbReference type="ChEBI" id="CHEBI:29105"/>
    </ligand>
</feature>
<evidence type="ECO:0000255" key="1">
    <source>
        <dbReference type="HAMAP-Rule" id="MF_01696"/>
    </source>
</evidence>
<organism>
    <name type="scientific">Gordonia bronchialis (strain ATCC 25592 / DSM 43247 / BCRC 13721 / JCM 3198 / KCTC 3076 / NBRC 16047 / NCTC 10667)</name>
    <name type="common">Rhodococcus bronchialis</name>
    <dbReference type="NCBI Taxonomy" id="526226"/>
    <lineage>
        <taxon>Bacteria</taxon>
        <taxon>Bacillati</taxon>
        <taxon>Actinomycetota</taxon>
        <taxon>Actinomycetes</taxon>
        <taxon>Mycobacteriales</taxon>
        <taxon>Gordoniaceae</taxon>
        <taxon>Gordonia</taxon>
    </lineage>
</organism>
<protein>
    <recommendedName>
        <fullName evidence="1">1D-myo-inositol 2-acetamido-2-deoxy-alpha-D-glucopyranoside deacetylase</fullName>
        <shortName evidence="1">GlcNAc-Ins deacetylase</shortName>
        <ecNumber evidence="1">3.5.1.103</ecNumber>
    </recommendedName>
    <alternativeName>
        <fullName>N-acetyl-1-D-myo-inositol 2-amino-2-deoxy-alpha-D-glucopyranoside deacetylase</fullName>
    </alternativeName>
</protein>
<reference key="1">
    <citation type="submission" date="2009-10" db="EMBL/GenBank/DDBJ databases">
        <title>The complete chromosome of Gordonia bronchialis DSM 43247.</title>
        <authorList>
            <consortium name="US DOE Joint Genome Institute (JGI-PGF)"/>
            <person name="Lucas S."/>
            <person name="Copeland A."/>
            <person name="Lapidus A."/>
            <person name="Glavina del Rio T."/>
            <person name="Dalin E."/>
            <person name="Tice H."/>
            <person name="Bruce D."/>
            <person name="Goodwin L."/>
            <person name="Pitluck S."/>
            <person name="Kyrpides N."/>
            <person name="Mavromatis K."/>
            <person name="Ivanova N."/>
            <person name="Ovchinnikova G."/>
            <person name="Saunders E."/>
            <person name="Brettin T."/>
            <person name="Detter J.C."/>
            <person name="Han C."/>
            <person name="Larimer F."/>
            <person name="Land M."/>
            <person name="Hauser L."/>
            <person name="Markowitz V."/>
            <person name="Cheng J.-F."/>
            <person name="Hugenholtz P."/>
            <person name="Woyke T."/>
            <person name="Wu D."/>
            <person name="Jando M."/>
            <person name="Schneider S."/>
            <person name="Goeker M."/>
            <person name="Klenk H.-P."/>
            <person name="Eisen J.A."/>
        </authorList>
    </citation>
    <scope>NUCLEOTIDE SEQUENCE [LARGE SCALE GENOMIC DNA]</scope>
    <source>
        <strain>ATCC 25592 / DSM 43247 / BCRC 13721 / JCM 3198 / KCTC 3076 / NBRC 16047 / NCTC 10667</strain>
    </source>
</reference>
<sequence length="283" mass="29802">MLLVHAHPDDETIMTGGTIARYLDEGVDVRVLTFTLGEEGEVIGDRWAQLVADGGADQLGGFRIGELTGALAALSPPGGSPVQPWFLGGAGRWRDSGMAGSAAARHPRALVNAGFDEPVGVLTDILESFAPQVVITYDSAGTYGHPDHKLVHEVTAAALARVAASRPEQIKVYESVTEHSALQAGLVAAARRVPDGWRMPGPGELPSYPDAMVTAEIDVRTQYDRKVAALAAHATQVTVAPSGTEYALSNNIVQPIFGHEHFIRVDAAAVAGPRETDLFDGIG</sequence>